<evidence type="ECO:0000255" key="1">
    <source>
        <dbReference type="HAMAP-Rule" id="MF_00060"/>
    </source>
</evidence>
<dbReference type="EC" id="3.1.3.5" evidence="1"/>
<dbReference type="EMBL" id="CP001398">
    <property type="protein sequence ID" value="ACS33890.1"/>
    <property type="molecule type" value="Genomic_DNA"/>
</dbReference>
<dbReference type="RefSeq" id="WP_015859002.1">
    <property type="nucleotide sequence ID" value="NC_012804.1"/>
</dbReference>
<dbReference type="SMR" id="C5A6M8"/>
<dbReference type="STRING" id="593117.TGAM_1388"/>
<dbReference type="PaxDb" id="593117-TGAM_1388"/>
<dbReference type="GeneID" id="7988121"/>
<dbReference type="KEGG" id="tga:TGAM_1388"/>
<dbReference type="PATRIC" id="fig|593117.10.peg.1390"/>
<dbReference type="eggNOG" id="arCOG02303">
    <property type="taxonomic scope" value="Archaea"/>
</dbReference>
<dbReference type="HOGENOM" id="CLU_045192_1_3_2"/>
<dbReference type="OrthoDB" id="26873at2157"/>
<dbReference type="Proteomes" id="UP000001488">
    <property type="component" value="Chromosome"/>
</dbReference>
<dbReference type="GO" id="GO:0005737">
    <property type="term" value="C:cytoplasm"/>
    <property type="evidence" value="ECO:0007669"/>
    <property type="project" value="UniProtKB-SubCell"/>
</dbReference>
<dbReference type="GO" id="GO:0008253">
    <property type="term" value="F:5'-nucleotidase activity"/>
    <property type="evidence" value="ECO:0007669"/>
    <property type="project" value="UniProtKB-UniRule"/>
</dbReference>
<dbReference type="GO" id="GO:0046872">
    <property type="term" value="F:metal ion binding"/>
    <property type="evidence" value="ECO:0007669"/>
    <property type="project" value="UniProtKB-UniRule"/>
</dbReference>
<dbReference type="GO" id="GO:0000166">
    <property type="term" value="F:nucleotide binding"/>
    <property type="evidence" value="ECO:0007669"/>
    <property type="project" value="UniProtKB-KW"/>
</dbReference>
<dbReference type="Gene3D" id="3.40.1210.10">
    <property type="entry name" value="Survival protein SurE-like phosphatase/nucleotidase"/>
    <property type="match status" value="1"/>
</dbReference>
<dbReference type="HAMAP" id="MF_00060">
    <property type="entry name" value="SurE"/>
    <property type="match status" value="1"/>
</dbReference>
<dbReference type="InterPro" id="IPR030048">
    <property type="entry name" value="SurE"/>
</dbReference>
<dbReference type="InterPro" id="IPR002828">
    <property type="entry name" value="SurE-like_Pase/nucleotidase"/>
</dbReference>
<dbReference type="InterPro" id="IPR036523">
    <property type="entry name" value="SurE-like_sf"/>
</dbReference>
<dbReference type="NCBIfam" id="NF001491">
    <property type="entry name" value="PRK00346.2-1"/>
    <property type="match status" value="1"/>
</dbReference>
<dbReference type="NCBIfam" id="TIGR00087">
    <property type="entry name" value="surE"/>
    <property type="match status" value="1"/>
</dbReference>
<dbReference type="PANTHER" id="PTHR30457">
    <property type="entry name" value="5'-NUCLEOTIDASE SURE"/>
    <property type="match status" value="1"/>
</dbReference>
<dbReference type="PANTHER" id="PTHR30457:SF0">
    <property type="entry name" value="PHOSPHATASE, PUTATIVE (AFU_ORTHOLOGUE AFUA_4G01070)-RELATED"/>
    <property type="match status" value="1"/>
</dbReference>
<dbReference type="Pfam" id="PF01975">
    <property type="entry name" value="SurE"/>
    <property type="match status" value="1"/>
</dbReference>
<dbReference type="SUPFAM" id="SSF64167">
    <property type="entry name" value="SurE-like"/>
    <property type="match status" value="1"/>
</dbReference>
<comment type="function">
    <text evidence="1">Nucleotidase that shows phosphatase activity on nucleoside 5'-monophosphates.</text>
</comment>
<comment type="catalytic activity">
    <reaction evidence="1">
        <text>a ribonucleoside 5'-phosphate + H2O = a ribonucleoside + phosphate</text>
        <dbReference type="Rhea" id="RHEA:12484"/>
        <dbReference type="ChEBI" id="CHEBI:15377"/>
        <dbReference type="ChEBI" id="CHEBI:18254"/>
        <dbReference type="ChEBI" id="CHEBI:43474"/>
        <dbReference type="ChEBI" id="CHEBI:58043"/>
        <dbReference type="EC" id="3.1.3.5"/>
    </reaction>
</comment>
<comment type="cofactor">
    <cofactor evidence="1">
        <name>a divalent metal cation</name>
        <dbReference type="ChEBI" id="CHEBI:60240"/>
    </cofactor>
    <text evidence="1">Binds 1 divalent metal cation per subunit.</text>
</comment>
<comment type="subcellular location">
    <subcellularLocation>
        <location evidence="1">Cytoplasm</location>
    </subcellularLocation>
</comment>
<comment type="similarity">
    <text evidence="1">Belongs to the SurE nucleotidase family.</text>
</comment>
<gene>
    <name evidence="1" type="primary">surE</name>
    <name type="ordered locus">TGAM_1388</name>
</gene>
<accession>C5A6M8</accession>
<feature type="chain" id="PRO_1000202372" description="5'-nucleotidase SurE">
    <location>
        <begin position="1"/>
        <end position="266"/>
    </location>
</feature>
<feature type="binding site" evidence="1">
    <location>
        <position position="8"/>
    </location>
    <ligand>
        <name>a divalent metal cation</name>
        <dbReference type="ChEBI" id="CHEBI:60240"/>
    </ligand>
</feature>
<feature type="binding site" evidence="1">
    <location>
        <position position="9"/>
    </location>
    <ligand>
        <name>a divalent metal cation</name>
        <dbReference type="ChEBI" id="CHEBI:60240"/>
    </ligand>
</feature>
<feature type="binding site" evidence="1">
    <location>
        <position position="39"/>
    </location>
    <ligand>
        <name>a divalent metal cation</name>
        <dbReference type="ChEBI" id="CHEBI:60240"/>
    </ligand>
</feature>
<feature type="binding site" evidence="1">
    <location>
        <position position="93"/>
    </location>
    <ligand>
        <name>a divalent metal cation</name>
        <dbReference type="ChEBI" id="CHEBI:60240"/>
    </ligand>
</feature>
<sequence length="266" mass="28890">MRILLTNDDGIYSNGLRAAVKALSELGEVYVVAPLFQRSASGRAMTLHRPIRAKRVDVPGARIAYGIDGTPTDCVIFAIARFGSFDLAVSGINLGENLSTEITVSGTASAAIEASTHGIPSIAVSLEVDWKKTLGEGEGVDFSVSAHFLRRIAGAVLERGLPEGVDMLNVNVPSDATEDTKMAITRLARKRYSPTVEERIDPKGNPYYWIVGRLVQDFEPGTDAYALKVERKVSVTPINIDMTARVDFEKLKNVLFGESLQTGRTY</sequence>
<reference key="1">
    <citation type="journal article" date="2007" name="Genome Biol.">
        <title>Genome analysis and genome-wide proteomics of Thermococcus gammatolerans, the most radioresistant organism known amongst the Archaea.</title>
        <authorList>
            <person name="Zivanovic Y."/>
            <person name="Armengaud J."/>
            <person name="Lagorce A."/>
            <person name="Leplat C."/>
            <person name="Guerin P."/>
            <person name="Dutertre M."/>
            <person name="Anthouard V."/>
            <person name="Forterre P."/>
            <person name="Wincker P."/>
            <person name="Confalonieri F."/>
        </authorList>
    </citation>
    <scope>NUCLEOTIDE SEQUENCE [LARGE SCALE GENOMIC DNA]</scope>
    <source>
        <strain>DSM 15229 / JCM 11827 / EJ3</strain>
    </source>
</reference>
<protein>
    <recommendedName>
        <fullName evidence="1">5'-nucleotidase SurE</fullName>
        <ecNumber evidence="1">3.1.3.5</ecNumber>
    </recommendedName>
    <alternativeName>
        <fullName evidence="1">Nucleoside 5'-monophosphate phosphohydrolase</fullName>
    </alternativeName>
</protein>
<organism>
    <name type="scientific">Thermococcus gammatolerans (strain DSM 15229 / JCM 11827 / EJ3)</name>
    <dbReference type="NCBI Taxonomy" id="593117"/>
    <lineage>
        <taxon>Archaea</taxon>
        <taxon>Methanobacteriati</taxon>
        <taxon>Methanobacteriota</taxon>
        <taxon>Thermococci</taxon>
        <taxon>Thermococcales</taxon>
        <taxon>Thermococcaceae</taxon>
        <taxon>Thermococcus</taxon>
    </lineage>
</organism>
<name>SURE_THEGJ</name>
<keyword id="KW-0963">Cytoplasm</keyword>
<keyword id="KW-0378">Hydrolase</keyword>
<keyword id="KW-0479">Metal-binding</keyword>
<keyword id="KW-0547">Nucleotide-binding</keyword>
<keyword id="KW-1185">Reference proteome</keyword>
<proteinExistence type="inferred from homology"/>